<dbReference type="EC" id="2.7.11.17"/>
<dbReference type="EMBL" id="BC077143">
    <property type="protein sequence ID" value="AAH77143.1"/>
    <property type="molecule type" value="mRNA"/>
</dbReference>
<dbReference type="EMBL" id="BC154189">
    <property type="protein sequence ID" value="AAI54190.1"/>
    <property type="molecule type" value="mRNA"/>
</dbReference>
<dbReference type="RefSeq" id="NP_001003602.1">
    <molecule id="Q6DEH3-2"/>
    <property type="nucleotide sequence ID" value="NM_001003602.2"/>
</dbReference>
<dbReference type="RefSeq" id="NP_001108180.1">
    <molecule id="Q6DEH3-1"/>
    <property type="nucleotide sequence ID" value="NM_001114708.2"/>
</dbReference>
<dbReference type="SMR" id="Q6DEH3"/>
<dbReference type="FunCoup" id="Q6DEH3">
    <property type="interactions" value="702"/>
</dbReference>
<dbReference type="STRING" id="7955.ENSDARP00000119349"/>
<dbReference type="PaxDb" id="7955-ENSDARP00000056465"/>
<dbReference type="Ensembl" id="ENSDART00000166198">
    <molecule id="Q6DEH3-1"/>
    <property type="protein sequence ID" value="ENSDARP00000131013"/>
    <property type="gene ID" value="ENSDARG00000043010"/>
</dbReference>
<dbReference type="GeneID" id="445208"/>
<dbReference type="KEGG" id="dre:445208"/>
<dbReference type="AGR" id="ZFIN:ZDB-GENE-040801-121"/>
<dbReference type="CTD" id="445208"/>
<dbReference type="ZFIN" id="ZDB-GENE-040801-121">
    <property type="gene designation" value="camk2d1"/>
</dbReference>
<dbReference type="eggNOG" id="KOG0033">
    <property type="taxonomic scope" value="Eukaryota"/>
</dbReference>
<dbReference type="HOGENOM" id="CLU_000288_71_3_1"/>
<dbReference type="InParanoid" id="Q6DEH3"/>
<dbReference type="OMA" id="HCAPERS"/>
<dbReference type="OrthoDB" id="336747at2759"/>
<dbReference type="PhylomeDB" id="Q6DEH3"/>
<dbReference type="TreeFam" id="TF315229"/>
<dbReference type="PRO" id="PR:Q6DEH3"/>
<dbReference type="Proteomes" id="UP000000437">
    <property type="component" value="Chromosome 7"/>
</dbReference>
<dbReference type="Bgee" id="ENSDARG00000043010">
    <property type="expression patterns" value="Expressed in zone of skin and 32 other cell types or tissues"/>
</dbReference>
<dbReference type="ExpressionAtlas" id="Q6DEH3">
    <property type="expression patterns" value="baseline"/>
</dbReference>
<dbReference type="GO" id="GO:0005737">
    <property type="term" value="C:cytoplasm"/>
    <property type="evidence" value="ECO:0000318"/>
    <property type="project" value="GO_Central"/>
</dbReference>
<dbReference type="GO" id="GO:0043005">
    <property type="term" value="C:neuron projection"/>
    <property type="evidence" value="ECO:0000318"/>
    <property type="project" value="GO_Central"/>
</dbReference>
<dbReference type="GO" id="GO:0014069">
    <property type="term" value="C:postsynaptic density"/>
    <property type="evidence" value="ECO:0000318"/>
    <property type="project" value="GO_Central"/>
</dbReference>
<dbReference type="GO" id="GO:0005524">
    <property type="term" value="F:ATP binding"/>
    <property type="evidence" value="ECO:0007669"/>
    <property type="project" value="UniProtKB-KW"/>
</dbReference>
<dbReference type="GO" id="GO:0004683">
    <property type="term" value="F:calcium/calmodulin-dependent protein kinase activity"/>
    <property type="evidence" value="ECO:0000318"/>
    <property type="project" value="GO_Central"/>
</dbReference>
<dbReference type="GO" id="GO:0005516">
    <property type="term" value="F:calmodulin binding"/>
    <property type="evidence" value="ECO:0000318"/>
    <property type="project" value="GO_Central"/>
</dbReference>
<dbReference type="GO" id="GO:0106310">
    <property type="term" value="F:protein serine kinase activity"/>
    <property type="evidence" value="ECO:0007669"/>
    <property type="project" value="RHEA"/>
</dbReference>
<dbReference type="GO" id="GO:0048168">
    <property type="term" value="P:regulation of neuronal synaptic plasticity"/>
    <property type="evidence" value="ECO:0000318"/>
    <property type="project" value="GO_Central"/>
</dbReference>
<dbReference type="GO" id="GO:1903076">
    <property type="term" value="P:regulation of protein localization to plasma membrane"/>
    <property type="evidence" value="ECO:0000318"/>
    <property type="project" value="GO_Central"/>
</dbReference>
<dbReference type="CDD" id="cd14086">
    <property type="entry name" value="STKc_CaMKII"/>
    <property type="match status" value="1"/>
</dbReference>
<dbReference type="FunFam" id="1.10.510.10:FF:000001">
    <property type="entry name" value="Calcium/calmodulin-dependent protein kinase type II subunit delta"/>
    <property type="match status" value="1"/>
</dbReference>
<dbReference type="FunFam" id="3.30.200.20:FF:000002">
    <property type="entry name" value="Calcium/calmodulin-dependent protein kinase type II subunit delta isoform 2"/>
    <property type="match status" value="1"/>
</dbReference>
<dbReference type="FunFam" id="3.10.450.50:FF:000001">
    <property type="entry name" value="calcium/calmodulin-dependent protein kinase type II subunit gamma isoform X1"/>
    <property type="match status" value="1"/>
</dbReference>
<dbReference type="Gene3D" id="3.10.450.50">
    <property type="match status" value="1"/>
</dbReference>
<dbReference type="Gene3D" id="6.10.140.620">
    <property type="match status" value="1"/>
</dbReference>
<dbReference type="Gene3D" id="3.30.200.20">
    <property type="entry name" value="Phosphorylase Kinase, domain 1"/>
    <property type="match status" value="1"/>
</dbReference>
<dbReference type="Gene3D" id="1.10.510.10">
    <property type="entry name" value="Transferase(Phosphotransferase) domain 1"/>
    <property type="match status" value="1"/>
</dbReference>
<dbReference type="InterPro" id="IPR013543">
    <property type="entry name" value="Ca/CaM-dep_prot_kinase-assoc"/>
</dbReference>
<dbReference type="InterPro" id="IPR011009">
    <property type="entry name" value="Kinase-like_dom_sf"/>
</dbReference>
<dbReference type="InterPro" id="IPR032710">
    <property type="entry name" value="NTF2-like_dom_sf"/>
</dbReference>
<dbReference type="InterPro" id="IPR000719">
    <property type="entry name" value="Prot_kinase_dom"/>
</dbReference>
<dbReference type="InterPro" id="IPR017441">
    <property type="entry name" value="Protein_kinase_ATP_BS"/>
</dbReference>
<dbReference type="InterPro" id="IPR008271">
    <property type="entry name" value="Ser/Thr_kinase_AS"/>
</dbReference>
<dbReference type="PANTHER" id="PTHR24347">
    <property type="entry name" value="SERINE/THREONINE-PROTEIN KINASE"/>
    <property type="match status" value="1"/>
</dbReference>
<dbReference type="Pfam" id="PF08332">
    <property type="entry name" value="CaMKII_AD"/>
    <property type="match status" value="1"/>
</dbReference>
<dbReference type="Pfam" id="PF00069">
    <property type="entry name" value="Pkinase"/>
    <property type="match status" value="1"/>
</dbReference>
<dbReference type="SMART" id="SM00220">
    <property type="entry name" value="S_TKc"/>
    <property type="match status" value="1"/>
</dbReference>
<dbReference type="SUPFAM" id="SSF54427">
    <property type="entry name" value="NTF2-like"/>
    <property type="match status" value="1"/>
</dbReference>
<dbReference type="SUPFAM" id="SSF56112">
    <property type="entry name" value="Protein kinase-like (PK-like)"/>
    <property type="match status" value="1"/>
</dbReference>
<dbReference type="PROSITE" id="PS00107">
    <property type="entry name" value="PROTEIN_KINASE_ATP"/>
    <property type="match status" value="1"/>
</dbReference>
<dbReference type="PROSITE" id="PS50011">
    <property type="entry name" value="PROTEIN_KINASE_DOM"/>
    <property type="match status" value="1"/>
</dbReference>
<dbReference type="PROSITE" id="PS00108">
    <property type="entry name" value="PROTEIN_KINASE_ST"/>
    <property type="match status" value="1"/>
</dbReference>
<gene>
    <name evidence="8" type="primary">camk2d1</name>
    <name evidence="11" type="synonym">camk2db</name>
    <name type="ORF">zgc:101001</name>
    <name type="ORF">zgc:173815</name>
</gene>
<accession>Q6DEH3</accession>
<accession>A8KBP0</accession>
<feature type="chain" id="PRO_0000296340" description="Calcium/calmodulin-dependent protein kinase type II delta 1 chain">
    <location>
        <begin position="1"/>
        <end position="491"/>
    </location>
</feature>
<feature type="domain" description="Protein kinase" evidence="4">
    <location>
        <begin position="13"/>
        <end position="271"/>
    </location>
</feature>
<feature type="region of interest" description="Disordered" evidence="6">
    <location>
        <begin position="315"/>
        <end position="354"/>
    </location>
</feature>
<feature type="compositionally biased region" description="Polar residues" evidence="6">
    <location>
        <begin position="328"/>
        <end position="338"/>
    </location>
</feature>
<feature type="active site" description="Proton acceptor" evidence="4 5">
    <location>
        <position position="135"/>
    </location>
</feature>
<feature type="binding site" evidence="4">
    <location>
        <begin position="19"/>
        <end position="27"/>
    </location>
    <ligand>
        <name>ATP</name>
        <dbReference type="ChEBI" id="CHEBI:30616"/>
    </ligand>
</feature>
<feature type="binding site" evidence="4">
    <location>
        <position position="42"/>
    </location>
    <ligand>
        <name>ATP</name>
        <dbReference type="ChEBI" id="CHEBI:30616"/>
    </ligand>
</feature>
<feature type="modified residue" description="Phosphothreonine" evidence="2">
    <location>
        <position position="286"/>
    </location>
</feature>
<feature type="modified residue" description="Phosphoserine" evidence="1">
    <location>
        <position position="314"/>
    </location>
</feature>
<feature type="modified residue" description="Phosphothreonine" evidence="2">
    <location>
        <position position="350"/>
    </location>
</feature>
<feature type="splice variant" id="VSP_035558" description="In isoform G." evidence="8 9">
    <location>
        <begin position="326"/>
        <end position="340"/>
    </location>
</feature>
<proteinExistence type="evidence at transcript level"/>
<evidence type="ECO:0000250" key="1">
    <source>
        <dbReference type="UniProtKB" id="Q13557"/>
    </source>
</evidence>
<evidence type="ECO:0000250" key="2">
    <source>
        <dbReference type="UniProtKB" id="Q6PHZ2"/>
    </source>
</evidence>
<evidence type="ECO:0000255" key="3"/>
<evidence type="ECO:0000255" key="4">
    <source>
        <dbReference type="PROSITE-ProRule" id="PRU00159"/>
    </source>
</evidence>
<evidence type="ECO:0000255" key="5">
    <source>
        <dbReference type="PROSITE-ProRule" id="PRU10027"/>
    </source>
</evidence>
<evidence type="ECO:0000256" key="6">
    <source>
        <dbReference type="SAM" id="MobiDB-lite"/>
    </source>
</evidence>
<evidence type="ECO:0000269" key="7">
    <source>
    </source>
</evidence>
<evidence type="ECO:0000303" key="8">
    <source>
    </source>
</evidence>
<evidence type="ECO:0000303" key="9">
    <source ref="1"/>
</evidence>
<evidence type="ECO:0000305" key="10"/>
<evidence type="ECO:0000312" key="11">
    <source>
        <dbReference type="EMBL" id="AAH77143.1"/>
    </source>
</evidence>
<evidence type="ECO:0000312" key="12">
    <source>
        <dbReference type="EMBL" id="AAI54190.1"/>
    </source>
</evidence>
<name>KC2D1_DANRE</name>
<keyword id="KW-0025">Alternative splicing</keyword>
<keyword id="KW-0067">ATP-binding</keyword>
<keyword id="KW-0112">Calmodulin-binding</keyword>
<keyword id="KW-0418">Kinase</keyword>
<keyword id="KW-0547">Nucleotide-binding</keyword>
<keyword id="KW-0597">Phosphoprotein</keyword>
<keyword id="KW-1185">Reference proteome</keyword>
<keyword id="KW-0723">Serine/threonine-protein kinase</keyword>
<keyword id="KW-0808">Transferase</keyword>
<protein>
    <recommendedName>
        <fullName evidence="8">Calcium/calmodulin-dependent protein kinase type II delta 1 chain</fullName>
        <ecNumber>2.7.11.17</ecNumber>
    </recommendedName>
    <alternativeName>
        <fullName>Calcium/calmodulin-dependent protein kinase type II delta-B chain</fullName>
        <shortName>CaM kinase II subunit delta-B</shortName>
        <shortName>CaM-kinase II delta-B chain</shortName>
        <shortName>CaMK-II subunit delta-B</shortName>
    </alternativeName>
</protein>
<comment type="function">
    <text evidence="1 2">CaM-kinase II (CAMK2) is a prominent kinase in the central nervous system.</text>
</comment>
<comment type="catalytic activity">
    <reaction evidence="10">
        <text>L-seryl-[protein] + ATP = O-phospho-L-seryl-[protein] + ADP + H(+)</text>
        <dbReference type="Rhea" id="RHEA:17989"/>
        <dbReference type="Rhea" id="RHEA-COMP:9863"/>
        <dbReference type="Rhea" id="RHEA-COMP:11604"/>
        <dbReference type="ChEBI" id="CHEBI:15378"/>
        <dbReference type="ChEBI" id="CHEBI:29999"/>
        <dbReference type="ChEBI" id="CHEBI:30616"/>
        <dbReference type="ChEBI" id="CHEBI:83421"/>
        <dbReference type="ChEBI" id="CHEBI:456216"/>
        <dbReference type="EC" id="2.7.11.17"/>
    </reaction>
</comment>
<comment type="catalytic activity">
    <reaction evidence="10">
        <text>L-threonyl-[protein] + ATP = O-phospho-L-threonyl-[protein] + ADP + H(+)</text>
        <dbReference type="Rhea" id="RHEA:46608"/>
        <dbReference type="Rhea" id="RHEA-COMP:11060"/>
        <dbReference type="Rhea" id="RHEA-COMP:11605"/>
        <dbReference type="ChEBI" id="CHEBI:15378"/>
        <dbReference type="ChEBI" id="CHEBI:30013"/>
        <dbReference type="ChEBI" id="CHEBI:30616"/>
        <dbReference type="ChEBI" id="CHEBI:61977"/>
        <dbReference type="ChEBI" id="CHEBI:456216"/>
        <dbReference type="EC" id="2.7.11.17"/>
    </reaction>
</comment>
<comment type="activity regulation">
    <text evidence="1">Autophosphorylation of CAMK2 plays an important role in the regulation of the kinase activity.</text>
</comment>
<comment type="subunit">
    <text evidence="1">CAMK2 is composed of four different chains: alpha, beta, gamma, and delta. The different isoforms assemble into homo- or heteromultimeric holoenzymes composed of 8 to 12 subunits (By similarity).</text>
</comment>
<comment type="alternative products">
    <event type="alternative splicing"/>
    <isoform>
        <id>Q6DEH3-1</id>
        <name evidence="7">E</name>
        <sequence type="displayed"/>
    </isoform>
    <isoform>
        <id>Q6DEH3-2</id>
        <name evidence="7">G</name>
        <sequence type="described" ref="VSP_035558"/>
    </isoform>
</comment>
<comment type="tissue specificity">
    <text evidence="7">First detected at the 18-somite stage where expression is restricted to somite boundaries. At 24 hpf, expression is elevated in epidermal tissue and in the hatching gland. After 24 hpf, expression dimishes, but persists at low levels along the dorsal trunk. At 48 hpf, expression is restricted at a low level to the forebrain. At 72 hpf, weak expression reappears along the entire dorsal trunk in discrete cell bodies.</text>
</comment>
<comment type="similarity">
    <text evidence="3">Belongs to the protein kinase superfamily. CAMK Ser/Thr protein kinase family. CaMK subfamily.</text>
</comment>
<reference evidence="10 11" key="1">
    <citation type="submission" date="2007-10" db="EMBL/GenBank/DDBJ databases">
        <authorList>
            <consortium name="NIH - Zebrafish Gene Collection (ZGC) project"/>
        </authorList>
    </citation>
    <scope>NUCLEOTIDE SEQUENCE [LARGE SCALE MRNA] (ISOFORMS E AND G)</scope>
    <source>
        <tissue evidence="11">Embryo</tissue>
        <tissue evidence="12">Olfactory epithelium</tissue>
    </source>
</reference>
<reference evidence="10" key="2">
    <citation type="journal article" date="2007" name="Dev. Dyn.">
        <title>Differential expression of CaMK-II genes during early zebrafish embryogenesis.</title>
        <authorList>
            <person name="Rothschild S.C."/>
            <person name="Lister J.A."/>
            <person name="Tombes R.M."/>
        </authorList>
    </citation>
    <scope>NUCLEOTIDE SEQUENCE [MRNA] OF 301-383 (ISOFORMS E AND G)</scope>
    <scope>ALTERNATIVE SPLICING</scope>
    <scope>TISSUE SPECIFICITY</scope>
</reference>
<organism>
    <name type="scientific">Danio rerio</name>
    <name type="common">Zebrafish</name>
    <name type="synonym">Brachydanio rerio</name>
    <dbReference type="NCBI Taxonomy" id="7955"/>
    <lineage>
        <taxon>Eukaryota</taxon>
        <taxon>Metazoa</taxon>
        <taxon>Chordata</taxon>
        <taxon>Craniata</taxon>
        <taxon>Vertebrata</taxon>
        <taxon>Euteleostomi</taxon>
        <taxon>Actinopterygii</taxon>
        <taxon>Neopterygii</taxon>
        <taxon>Teleostei</taxon>
        <taxon>Ostariophysi</taxon>
        <taxon>Cypriniformes</taxon>
        <taxon>Danionidae</taxon>
        <taxon>Danioninae</taxon>
        <taxon>Danio</taxon>
    </lineage>
</organism>
<sequence>MASTTCTRFTDEYQLYEELGKGAFSVVRRCMKISTGQEYAAKIINTKKLSARDHQKLEREARICRLLKHANIVRLHDSISEEGVHYLVFDLVTGGELFEDIVAREYYSEADASHCIQQILEAVLHCHQMGVVHRDLKPENLLLASKLKGAAVKLADFGLAIEVQGDQQAWFGFAGTPGYLSPEVLRKEPYGKPVDMWACGVILYILLVGYPPFWDEDQHRLYQQIKAGAYDFPSPEWDTVTPEAKDLINKMLTINPAKRITAAEALKHPWICQRSTVASMMHRQETVECLKKFNARRKLKGAILTTMLATRNFSSKNPYKKPDGVKEPQTTVIHNPTDGNKESSESTNTTIEDEDIKARKQEIIKVTELLIEAINNGEFEAYTKICDPGLTSFEPEALGNLVEGTDFHRFYFENSLSKGHKPIHTILLNPHVHLIGEDAACIAYIRLTQYMDVNNMPRTMQSEETRVWHRRDGKWQNIHFHRSGSPTVPTK</sequence>